<accession>O31487</accession>
<accession>P96586</accession>
<organism>
    <name type="scientific">Bacillus subtilis (strain 168)</name>
    <dbReference type="NCBI Taxonomy" id="224308"/>
    <lineage>
        <taxon>Bacteria</taxon>
        <taxon>Bacillati</taxon>
        <taxon>Bacillota</taxon>
        <taxon>Bacilli</taxon>
        <taxon>Bacillales</taxon>
        <taxon>Bacillaceae</taxon>
        <taxon>Bacillus</taxon>
    </lineage>
</organism>
<gene>
    <name type="primary">ydaL</name>
    <name type="ordered locus">BSU04290</name>
</gene>
<evidence type="ECO:0000255" key="1"/>
<evidence type="ECO:0000305" key="2"/>
<dbReference type="EMBL" id="AB001488">
    <property type="protein sequence ID" value="BAA19266.1"/>
    <property type="status" value="ALT_INIT"/>
    <property type="molecule type" value="Genomic_DNA"/>
</dbReference>
<dbReference type="EMBL" id="AL009126">
    <property type="protein sequence ID" value="CAB12236.1"/>
    <property type="molecule type" value="Genomic_DNA"/>
</dbReference>
<dbReference type="PIR" id="C69769">
    <property type="entry name" value="C69769"/>
</dbReference>
<dbReference type="RefSeq" id="NP_388310.1">
    <property type="nucleotide sequence ID" value="NC_000964.3"/>
</dbReference>
<dbReference type="RefSeq" id="WP_010886408.1">
    <property type="nucleotide sequence ID" value="NZ_OZ025638.1"/>
</dbReference>
<dbReference type="FunCoup" id="O31487">
    <property type="interactions" value="234"/>
</dbReference>
<dbReference type="STRING" id="224308.BSU04290"/>
<dbReference type="PaxDb" id="224308-BSU04290"/>
<dbReference type="EnsemblBacteria" id="CAB12236">
    <property type="protein sequence ID" value="CAB12236"/>
    <property type="gene ID" value="BSU_04290"/>
</dbReference>
<dbReference type="GeneID" id="938244"/>
<dbReference type="KEGG" id="bsu:BSU04290"/>
<dbReference type="PATRIC" id="fig|224308.43.peg.446"/>
<dbReference type="eggNOG" id="COG5298">
    <property type="taxonomic scope" value="Bacteria"/>
</dbReference>
<dbReference type="InParanoid" id="O31487"/>
<dbReference type="OrthoDB" id="2339428at2"/>
<dbReference type="PhylomeDB" id="O31487"/>
<dbReference type="BioCyc" id="BSUB:BSU04290-MONOMER"/>
<dbReference type="Proteomes" id="UP000001570">
    <property type="component" value="Chromosome"/>
</dbReference>
<dbReference type="GO" id="GO:0005886">
    <property type="term" value="C:plasma membrane"/>
    <property type="evidence" value="ECO:0007669"/>
    <property type="project" value="UniProtKB-SubCell"/>
</dbReference>
<dbReference type="CDD" id="cd10923">
    <property type="entry name" value="CE4_COG5298"/>
    <property type="match status" value="1"/>
</dbReference>
<dbReference type="InterPro" id="IPR018763">
    <property type="entry name" value="DUF2334"/>
</dbReference>
<dbReference type="Pfam" id="PF10096">
    <property type="entry name" value="DUF2334"/>
    <property type="match status" value="1"/>
</dbReference>
<protein>
    <recommendedName>
        <fullName>Uncharacterized protein YdaL</fullName>
    </recommendedName>
</protein>
<feature type="signal peptide" evidence="1">
    <location>
        <begin position="1"/>
        <end position="21"/>
    </location>
</feature>
<feature type="chain" id="PRO_0000360066" description="Uncharacterized protein YdaL">
    <location>
        <begin position="22"/>
        <end position="569"/>
    </location>
</feature>
<feature type="topological domain" description="Extracellular" evidence="1">
    <location>
        <begin position="22"/>
        <end position="530"/>
    </location>
</feature>
<feature type="transmembrane region" description="Helical" evidence="1">
    <location>
        <begin position="531"/>
        <end position="551"/>
    </location>
</feature>
<feature type="topological domain" description="Cytoplasmic" evidence="1">
    <location>
        <begin position="552"/>
        <end position="569"/>
    </location>
</feature>
<comment type="subcellular location">
    <subcellularLocation>
        <location evidence="2">Cell membrane</location>
        <topology evidence="2">Single-pass type I membrane protein</topology>
    </subcellularLocation>
</comment>
<comment type="sequence caution" evidence="2">
    <conflict type="erroneous initiation">
        <sequence resource="EMBL-CDS" id="BAA19266"/>
    </conflict>
</comment>
<reference key="1">
    <citation type="submission" date="1997-03" db="EMBL/GenBank/DDBJ databases">
        <title>A 148 kbp sequence of the region between 35 and 47 degree of the Bacillus subtilis genome.</title>
        <authorList>
            <person name="Kasahara Y."/>
            <person name="Nakai S."/>
            <person name="Lee S."/>
            <person name="Sadaie Y."/>
            <person name="Ogasawara N."/>
        </authorList>
    </citation>
    <scope>NUCLEOTIDE SEQUENCE [GENOMIC DNA]</scope>
    <source>
        <strain>168</strain>
    </source>
</reference>
<reference key="2">
    <citation type="journal article" date="1997" name="Nature">
        <title>The complete genome sequence of the Gram-positive bacterium Bacillus subtilis.</title>
        <authorList>
            <person name="Kunst F."/>
            <person name="Ogasawara N."/>
            <person name="Moszer I."/>
            <person name="Albertini A.M."/>
            <person name="Alloni G."/>
            <person name="Azevedo V."/>
            <person name="Bertero M.G."/>
            <person name="Bessieres P."/>
            <person name="Bolotin A."/>
            <person name="Borchert S."/>
            <person name="Borriss R."/>
            <person name="Boursier L."/>
            <person name="Brans A."/>
            <person name="Braun M."/>
            <person name="Brignell S.C."/>
            <person name="Bron S."/>
            <person name="Brouillet S."/>
            <person name="Bruschi C.V."/>
            <person name="Caldwell B."/>
            <person name="Capuano V."/>
            <person name="Carter N.M."/>
            <person name="Choi S.-K."/>
            <person name="Codani J.-J."/>
            <person name="Connerton I.F."/>
            <person name="Cummings N.J."/>
            <person name="Daniel R.A."/>
            <person name="Denizot F."/>
            <person name="Devine K.M."/>
            <person name="Duesterhoeft A."/>
            <person name="Ehrlich S.D."/>
            <person name="Emmerson P.T."/>
            <person name="Entian K.-D."/>
            <person name="Errington J."/>
            <person name="Fabret C."/>
            <person name="Ferrari E."/>
            <person name="Foulger D."/>
            <person name="Fritz C."/>
            <person name="Fujita M."/>
            <person name="Fujita Y."/>
            <person name="Fuma S."/>
            <person name="Galizzi A."/>
            <person name="Galleron N."/>
            <person name="Ghim S.-Y."/>
            <person name="Glaser P."/>
            <person name="Goffeau A."/>
            <person name="Golightly E.J."/>
            <person name="Grandi G."/>
            <person name="Guiseppi G."/>
            <person name="Guy B.J."/>
            <person name="Haga K."/>
            <person name="Haiech J."/>
            <person name="Harwood C.R."/>
            <person name="Henaut A."/>
            <person name="Hilbert H."/>
            <person name="Holsappel S."/>
            <person name="Hosono S."/>
            <person name="Hullo M.-F."/>
            <person name="Itaya M."/>
            <person name="Jones L.-M."/>
            <person name="Joris B."/>
            <person name="Karamata D."/>
            <person name="Kasahara Y."/>
            <person name="Klaerr-Blanchard M."/>
            <person name="Klein C."/>
            <person name="Kobayashi Y."/>
            <person name="Koetter P."/>
            <person name="Koningstein G."/>
            <person name="Krogh S."/>
            <person name="Kumano M."/>
            <person name="Kurita K."/>
            <person name="Lapidus A."/>
            <person name="Lardinois S."/>
            <person name="Lauber J."/>
            <person name="Lazarevic V."/>
            <person name="Lee S.-M."/>
            <person name="Levine A."/>
            <person name="Liu H."/>
            <person name="Masuda S."/>
            <person name="Mauel C."/>
            <person name="Medigue C."/>
            <person name="Medina N."/>
            <person name="Mellado R.P."/>
            <person name="Mizuno M."/>
            <person name="Moestl D."/>
            <person name="Nakai S."/>
            <person name="Noback M."/>
            <person name="Noone D."/>
            <person name="O'Reilly M."/>
            <person name="Ogawa K."/>
            <person name="Ogiwara A."/>
            <person name="Oudega B."/>
            <person name="Park S.-H."/>
            <person name="Parro V."/>
            <person name="Pohl T.M."/>
            <person name="Portetelle D."/>
            <person name="Porwollik S."/>
            <person name="Prescott A.M."/>
            <person name="Presecan E."/>
            <person name="Pujic P."/>
            <person name="Purnelle B."/>
            <person name="Rapoport G."/>
            <person name="Rey M."/>
            <person name="Reynolds S."/>
            <person name="Rieger M."/>
            <person name="Rivolta C."/>
            <person name="Rocha E."/>
            <person name="Roche B."/>
            <person name="Rose M."/>
            <person name="Sadaie Y."/>
            <person name="Sato T."/>
            <person name="Scanlan E."/>
            <person name="Schleich S."/>
            <person name="Schroeter R."/>
            <person name="Scoffone F."/>
            <person name="Sekiguchi J."/>
            <person name="Sekowska A."/>
            <person name="Seror S.J."/>
            <person name="Serror P."/>
            <person name="Shin B.-S."/>
            <person name="Soldo B."/>
            <person name="Sorokin A."/>
            <person name="Tacconi E."/>
            <person name="Takagi T."/>
            <person name="Takahashi H."/>
            <person name="Takemaru K."/>
            <person name="Takeuchi M."/>
            <person name="Tamakoshi A."/>
            <person name="Tanaka T."/>
            <person name="Terpstra P."/>
            <person name="Tognoni A."/>
            <person name="Tosato V."/>
            <person name="Uchiyama S."/>
            <person name="Vandenbol M."/>
            <person name="Vannier F."/>
            <person name="Vassarotti A."/>
            <person name="Viari A."/>
            <person name="Wambutt R."/>
            <person name="Wedler E."/>
            <person name="Wedler H."/>
            <person name="Weitzenegger T."/>
            <person name="Winters P."/>
            <person name="Wipat A."/>
            <person name="Yamamoto H."/>
            <person name="Yamane K."/>
            <person name="Yasumoto K."/>
            <person name="Yata K."/>
            <person name="Yoshida K."/>
            <person name="Yoshikawa H.-F."/>
            <person name="Zumstein E."/>
            <person name="Yoshikawa H."/>
            <person name="Danchin A."/>
        </authorList>
    </citation>
    <scope>NUCLEOTIDE SEQUENCE [LARGE SCALE GENOMIC DNA]</scope>
    <source>
        <strain>168</strain>
    </source>
</reference>
<proteinExistence type="inferred from homology"/>
<sequence length="569" mass="63849">MLCVMMLLFSAIASFPVSAQAKDQDAGILIIYSTLDGKESSQVKMLDLLAGHFTSHVTVKKDSDVEASDFKGKDHVIYYGQTKRKLSQKLLSLISGVKKPVVAIGYNAGQISQFSGLSLARKENVFQVHSRSEKADVSLESGLNVLSVSGLKGTALYTFKADEGTTHSFIWKTKKGNVYIGLTNLLNDNLIVAKQLREAFGEKAGTTLLYLRLEDISPMSDEKLLLQAGTYLHKRHIPFILAVIPVYLNPETGDKVYLSNQPKMVKVLKKLQSMGGSIIVHGYTHAYRYSETGEGFEFWDAKADQPITSGNAEDPPSILEKEQDFPNEQAYHSYLEPFREKEETYTKQKLTRAIEDLTSSGLYPLAFEAPHYTMSEYGYQIASQYFTSIFGQVQLSSTTWKTSGAPPFVTAPSMLHGMTLYPETIGFVDTSKQNPLGEMEEHISQMIDFEGGVAGGFYHPYLGMKYLPELVDQMERIPDSEWLDLKKTKQTVKTDKVEIHTSGDGTIQVKNGVSPIYEFFDHHRQTPLEKALWILSAVVLLFVIMFVSYTFYLRATLKKRIFKERRSLG</sequence>
<keyword id="KW-1003">Cell membrane</keyword>
<keyword id="KW-0472">Membrane</keyword>
<keyword id="KW-1185">Reference proteome</keyword>
<keyword id="KW-0732">Signal</keyword>
<keyword id="KW-0812">Transmembrane</keyword>
<keyword id="KW-1133">Transmembrane helix</keyword>
<name>YDAL_BACSU</name>